<sequence length="51" mass="5933">MEEEKAVSLAKEIIELDIKRDEMLETFMQLAGEQAFQLLRSVQNGQYRKSS</sequence>
<organism>
    <name type="scientific">Bacillus subtilis (strain 168)</name>
    <dbReference type="NCBI Taxonomy" id="224308"/>
    <lineage>
        <taxon>Bacteria</taxon>
        <taxon>Bacillati</taxon>
        <taxon>Bacillota</taxon>
        <taxon>Bacilli</taxon>
        <taxon>Bacillales</taxon>
        <taxon>Bacillaceae</taxon>
        <taxon>Bacillus</taxon>
    </lineage>
</organism>
<protein>
    <recommendedName>
        <fullName>Uncharacterized protein YkzB</fullName>
    </recommendedName>
</protein>
<gene>
    <name type="primary">ykzB</name>
    <name type="ordered locus">BSU13320</name>
</gene>
<evidence type="ECO:0000255" key="1"/>
<reference key="1">
    <citation type="journal article" date="1997" name="Nature">
        <title>The complete genome sequence of the Gram-positive bacterium Bacillus subtilis.</title>
        <authorList>
            <person name="Kunst F."/>
            <person name="Ogasawara N."/>
            <person name="Moszer I."/>
            <person name="Albertini A.M."/>
            <person name="Alloni G."/>
            <person name="Azevedo V."/>
            <person name="Bertero M.G."/>
            <person name="Bessieres P."/>
            <person name="Bolotin A."/>
            <person name="Borchert S."/>
            <person name="Borriss R."/>
            <person name="Boursier L."/>
            <person name="Brans A."/>
            <person name="Braun M."/>
            <person name="Brignell S.C."/>
            <person name="Bron S."/>
            <person name="Brouillet S."/>
            <person name="Bruschi C.V."/>
            <person name="Caldwell B."/>
            <person name="Capuano V."/>
            <person name="Carter N.M."/>
            <person name="Choi S.-K."/>
            <person name="Codani J.-J."/>
            <person name="Connerton I.F."/>
            <person name="Cummings N.J."/>
            <person name="Daniel R.A."/>
            <person name="Denizot F."/>
            <person name="Devine K.M."/>
            <person name="Duesterhoeft A."/>
            <person name="Ehrlich S.D."/>
            <person name="Emmerson P.T."/>
            <person name="Entian K.-D."/>
            <person name="Errington J."/>
            <person name="Fabret C."/>
            <person name="Ferrari E."/>
            <person name="Foulger D."/>
            <person name="Fritz C."/>
            <person name="Fujita M."/>
            <person name="Fujita Y."/>
            <person name="Fuma S."/>
            <person name="Galizzi A."/>
            <person name="Galleron N."/>
            <person name="Ghim S.-Y."/>
            <person name="Glaser P."/>
            <person name="Goffeau A."/>
            <person name="Golightly E.J."/>
            <person name="Grandi G."/>
            <person name="Guiseppi G."/>
            <person name="Guy B.J."/>
            <person name="Haga K."/>
            <person name="Haiech J."/>
            <person name="Harwood C.R."/>
            <person name="Henaut A."/>
            <person name="Hilbert H."/>
            <person name="Holsappel S."/>
            <person name="Hosono S."/>
            <person name="Hullo M.-F."/>
            <person name="Itaya M."/>
            <person name="Jones L.-M."/>
            <person name="Joris B."/>
            <person name="Karamata D."/>
            <person name="Kasahara Y."/>
            <person name="Klaerr-Blanchard M."/>
            <person name="Klein C."/>
            <person name="Kobayashi Y."/>
            <person name="Koetter P."/>
            <person name="Koningstein G."/>
            <person name="Krogh S."/>
            <person name="Kumano M."/>
            <person name="Kurita K."/>
            <person name="Lapidus A."/>
            <person name="Lardinois S."/>
            <person name="Lauber J."/>
            <person name="Lazarevic V."/>
            <person name="Lee S.-M."/>
            <person name="Levine A."/>
            <person name="Liu H."/>
            <person name="Masuda S."/>
            <person name="Mauel C."/>
            <person name="Medigue C."/>
            <person name="Medina N."/>
            <person name="Mellado R.P."/>
            <person name="Mizuno M."/>
            <person name="Moestl D."/>
            <person name="Nakai S."/>
            <person name="Noback M."/>
            <person name="Noone D."/>
            <person name="O'Reilly M."/>
            <person name="Ogawa K."/>
            <person name="Ogiwara A."/>
            <person name="Oudega B."/>
            <person name="Park S.-H."/>
            <person name="Parro V."/>
            <person name="Pohl T.M."/>
            <person name="Portetelle D."/>
            <person name="Porwollik S."/>
            <person name="Prescott A.M."/>
            <person name="Presecan E."/>
            <person name="Pujic P."/>
            <person name="Purnelle B."/>
            <person name="Rapoport G."/>
            <person name="Rey M."/>
            <person name="Reynolds S."/>
            <person name="Rieger M."/>
            <person name="Rivolta C."/>
            <person name="Rocha E."/>
            <person name="Roche B."/>
            <person name="Rose M."/>
            <person name="Sadaie Y."/>
            <person name="Sato T."/>
            <person name="Scanlan E."/>
            <person name="Schleich S."/>
            <person name="Schroeter R."/>
            <person name="Scoffone F."/>
            <person name="Sekiguchi J."/>
            <person name="Sekowska A."/>
            <person name="Seror S.J."/>
            <person name="Serror P."/>
            <person name="Shin B.-S."/>
            <person name="Soldo B."/>
            <person name="Sorokin A."/>
            <person name="Tacconi E."/>
            <person name="Takagi T."/>
            <person name="Takahashi H."/>
            <person name="Takemaru K."/>
            <person name="Takeuchi M."/>
            <person name="Tamakoshi A."/>
            <person name="Tanaka T."/>
            <person name="Terpstra P."/>
            <person name="Tognoni A."/>
            <person name="Tosato V."/>
            <person name="Uchiyama S."/>
            <person name="Vandenbol M."/>
            <person name="Vannier F."/>
            <person name="Vassarotti A."/>
            <person name="Viari A."/>
            <person name="Wambutt R."/>
            <person name="Wedler E."/>
            <person name="Wedler H."/>
            <person name="Weitzenegger T."/>
            <person name="Winters P."/>
            <person name="Wipat A."/>
            <person name="Yamamoto H."/>
            <person name="Yamane K."/>
            <person name="Yasumoto K."/>
            <person name="Yata K."/>
            <person name="Yoshida K."/>
            <person name="Yoshikawa H.-F."/>
            <person name="Zumstein E."/>
            <person name="Yoshikawa H."/>
            <person name="Danchin A."/>
        </authorList>
    </citation>
    <scope>NUCLEOTIDE SEQUENCE [LARGE SCALE GENOMIC DNA]</scope>
    <source>
        <strain>168</strain>
    </source>
</reference>
<name>YKZB_BACSU</name>
<dbReference type="EMBL" id="AL009126">
    <property type="protein sequence ID" value="CAB13189.1"/>
    <property type="molecule type" value="Genomic_DNA"/>
</dbReference>
<dbReference type="PIR" id="G69870">
    <property type="entry name" value="G69870"/>
</dbReference>
<dbReference type="RefSeq" id="NP_389215.1">
    <property type="nucleotide sequence ID" value="NC_000964.3"/>
</dbReference>
<dbReference type="RefSeq" id="WP_003232538.1">
    <property type="nucleotide sequence ID" value="NZ_OZ025638.1"/>
</dbReference>
<dbReference type="SMR" id="O34923"/>
<dbReference type="FunCoup" id="O34923">
    <property type="interactions" value="110"/>
</dbReference>
<dbReference type="STRING" id="224308.BSU13320"/>
<dbReference type="PaxDb" id="224308-BSU13320"/>
<dbReference type="EnsemblBacteria" id="CAB13189">
    <property type="protein sequence ID" value="CAB13189"/>
    <property type="gene ID" value="BSU_13320"/>
</dbReference>
<dbReference type="GeneID" id="939392"/>
<dbReference type="KEGG" id="bsu:BSU13320"/>
<dbReference type="PATRIC" id="fig|224308.179.peg.1447"/>
<dbReference type="eggNOG" id="ENOG5030DCJ">
    <property type="taxonomic scope" value="Bacteria"/>
</dbReference>
<dbReference type="InParanoid" id="O34923"/>
<dbReference type="OrthoDB" id="2913106at2"/>
<dbReference type="BioCyc" id="BSUB:BSU13320-MONOMER"/>
<dbReference type="Proteomes" id="UP000001570">
    <property type="component" value="Chromosome"/>
</dbReference>
<accession>O34923</accession>
<feature type="chain" id="PRO_0000049614" description="Uncharacterized protein YkzB">
    <location>
        <begin position="1"/>
        <end position="51"/>
    </location>
</feature>
<feature type="coiled-coil region" evidence="1">
    <location>
        <begin position="3"/>
        <end position="30"/>
    </location>
</feature>
<proteinExistence type="predicted"/>
<keyword id="KW-0175">Coiled coil</keyword>
<keyword id="KW-1185">Reference proteome</keyword>